<keyword id="KW-0106">Calcium</keyword>
<keyword id="KW-0903">Direct protein sequencing</keyword>
<keyword id="KW-1015">Disulfide bond</keyword>
<keyword id="KW-1199">Hemostasis impairing toxin</keyword>
<keyword id="KW-0378">Hydrolase</keyword>
<keyword id="KW-0442">Lipid degradation</keyword>
<keyword id="KW-0443">Lipid metabolism</keyword>
<keyword id="KW-0479">Metal-binding</keyword>
<keyword id="KW-1201">Platelet aggregation inhibiting toxin</keyword>
<keyword id="KW-0964">Secreted</keyword>
<keyword id="KW-0800">Toxin</keyword>
<feature type="chain" id="PRO_0000419073" description="Acidic phospholipase A2 CTs-A3">
    <location>
        <begin position="1"/>
        <end position="122"/>
    </location>
</feature>
<feature type="active site" evidence="2">
    <location>
        <position position="47"/>
    </location>
</feature>
<feature type="active site" evidence="2">
    <location>
        <position position="89"/>
    </location>
</feature>
<feature type="binding site" evidence="2">
    <location>
        <position position="27"/>
    </location>
    <ligand>
        <name>Ca(2+)</name>
        <dbReference type="ChEBI" id="CHEBI:29108"/>
    </ligand>
</feature>
<feature type="binding site" evidence="2">
    <location>
        <position position="29"/>
    </location>
    <ligand>
        <name>Ca(2+)</name>
        <dbReference type="ChEBI" id="CHEBI:29108"/>
    </ligand>
</feature>
<feature type="binding site" evidence="2">
    <location>
        <position position="31"/>
    </location>
    <ligand>
        <name>Ca(2+)</name>
        <dbReference type="ChEBI" id="CHEBI:29108"/>
    </ligand>
</feature>
<feature type="binding site" evidence="2">
    <location>
        <position position="48"/>
    </location>
    <ligand>
        <name>Ca(2+)</name>
        <dbReference type="ChEBI" id="CHEBI:29108"/>
    </ligand>
</feature>
<feature type="disulfide bond" evidence="2">
    <location>
        <begin position="26"/>
        <end position="116"/>
    </location>
</feature>
<feature type="disulfide bond" evidence="2">
    <location>
        <begin position="28"/>
        <end position="44"/>
    </location>
</feature>
<feature type="disulfide bond" evidence="2">
    <location>
        <begin position="43"/>
        <end position="95"/>
    </location>
</feature>
<feature type="disulfide bond" evidence="2">
    <location>
        <begin position="49"/>
        <end position="122"/>
    </location>
</feature>
<feature type="disulfide bond" evidence="2">
    <location>
        <begin position="50"/>
        <end position="88"/>
    </location>
</feature>
<feature type="disulfide bond" evidence="2">
    <location>
        <begin position="57"/>
        <end position="81"/>
    </location>
</feature>
<feature type="disulfide bond" evidence="2">
    <location>
        <begin position="75"/>
        <end position="86"/>
    </location>
</feature>
<dbReference type="EC" id="3.1.1.4"/>
<dbReference type="EMBL" id="AY211943">
    <property type="protein sequence ID" value="AAP48901.1"/>
    <property type="molecule type" value="mRNA"/>
</dbReference>
<dbReference type="SMR" id="Q6H3C6"/>
<dbReference type="GO" id="GO:0005576">
    <property type="term" value="C:extracellular region"/>
    <property type="evidence" value="ECO:0007669"/>
    <property type="project" value="UniProtKB-SubCell"/>
</dbReference>
<dbReference type="GO" id="GO:0005509">
    <property type="term" value="F:calcium ion binding"/>
    <property type="evidence" value="ECO:0007669"/>
    <property type="project" value="InterPro"/>
</dbReference>
<dbReference type="GO" id="GO:0047498">
    <property type="term" value="F:calcium-dependent phospholipase A2 activity"/>
    <property type="evidence" value="ECO:0007669"/>
    <property type="project" value="TreeGrafter"/>
</dbReference>
<dbReference type="GO" id="GO:0005543">
    <property type="term" value="F:phospholipid binding"/>
    <property type="evidence" value="ECO:0007669"/>
    <property type="project" value="TreeGrafter"/>
</dbReference>
<dbReference type="GO" id="GO:0090729">
    <property type="term" value="F:toxin activity"/>
    <property type="evidence" value="ECO:0007669"/>
    <property type="project" value="UniProtKB-KW"/>
</dbReference>
<dbReference type="GO" id="GO:0050482">
    <property type="term" value="P:arachidonate secretion"/>
    <property type="evidence" value="ECO:0007669"/>
    <property type="project" value="InterPro"/>
</dbReference>
<dbReference type="GO" id="GO:0016042">
    <property type="term" value="P:lipid catabolic process"/>
    <property type="evidence" value="ECO:0007669"/>
    <property type="project" value="UniProtKB-KW"/>
</dbReference>
<dbReference type="GO" id="GO:0042130">
    <property type="term" value="P:negative regulation of T cell proliferation"/>
    <property type="evidence" value="ECO:0007669"/>
    <property type="project" value="TreeGrafter"/>
</dbReference>
<dbReference type="GO" id="GO:0006644">
    <property type="term" value="P:phospholipid metabolic process"/>
    <property type="evidence" value="ECO:0007669"/>
    <property type="project" value="InterPro"/>
</dbReference>
<dbReference type="CDD" id="cd00125">
    <property type="entry name" value="PLA2c"/>
    <property type="match status" value="1"/>
</dbReference>
<dbReference type="FunFam" id="1.20.90.10:FF:000001">
    <property type="entry name" value="Basic phospholipase A2 homolog"/>
    <property type="match status" value="1"/>
</dbReference>
<dbReference type="Gene3D" id="1.20.90.10">
    <property type="entry name" value="Phospholipase A2 domain"/>
    <property type="match status" value="1"/>
</dbReference>
<dbReference type="InterPro" id="IPR001211">
    <property type="entry name" value="PLipase_A2"/>
</dbReference>
<dbReference type="InterPro" id="IPR033112">
    <property type="entry name" value="PLipase_A2_Asp_AS"/>
</dbReference>
<dbReference type="InterPro" id="IPR016090">
    <property type="entry name" value="PLipase_A2_dom"/>
</dbReference>
<dbReference type="InterPro" id="IPR036444">
    <property type="entry name" value="PLipase_A2_dom_sf"/>
</dbReference>
<dbReference type="InterPro" id="IPR033113">
    <property type="entry name" value="PLipase_A2_His_AS"/>
</dbReference>
<dbReference type="PANTHER" id="PTHR11716">
    <property type="entry name" value="PHOSPHOLIPASE A2 FAMILY MEMBER"/>
    <property type="match status" value="1"/>
</dbReference>
<dbReference type="PANTHER" id="PTHR11716:SF9">
    <property type="entry name" value="PHOSPHOLIPASE A2, MEMBRANE ASSOCIATED"/>
    <property type="match status" value="1"/>
</dbReference>
<dbReference type="Pfam" id="PF00068">
    <property type="entry name" value="Phospholip_A2_1"/>
    <property type="match status" value="1"/>
</dbReference>
<dbReference type="PRINTS" id="PR00389">
    <property type="entry name" value="PHPHLIPASEA2"/>
</dbReference>
<dbReference type="SMART" id="SM00085">
    <property type="entry name" value="PA2c"/>
    <property type="match status" value="1"/>
</dbReference>
<dbReference type="SUPFAM" id="SSF48619">
    <property type="entry name" value="Phospholipase A2, PLA2"/>
    <property type="match status" value="1"/>
</dbReference>
<dbReference type="PROSITE" id="PS00119">
    <property type="entry name" value="PA2_ASP"/>
    <property type="match status" value="1"/>
</dbReference>
<dbReference type="PROSITE" id="PS00118">
    <property type="entry name" value="PA2_HIS"/>
    <property type="match status" value="1"/>
</dbReference>
<reference key="1">
    <citation type="journal article" date="2004" name="Biochem. J.">
        <title>Venom phospholipases A2 of bamboo viper (Trimeresurus stejnegeri): molecular characterization, geographic variations and evidence of multiple ancestries.</title>
        <authorList>
            <person name="Tsai I.-H."/>
            <person name="Wang Y.-M."/>
            <person name="Chen Y.-H."/>
            <person name="Tsai T.-S."/>
            <person name="Tu M.-C."/>
        </authorList>
    </citation>
    <scope>NUCLEOTIDE SEQUENCE [MRNA]</scope>
    <scope>PROTEIN SEQUENCE OF 1-23</scope>
    <scope>FUNCTION</scope>
    <scope>MASS SPECTROMETRY</scope>
    <source>
        <strain>Chinese</strain>
        <tissue>Venom</tissue>
        <tissue>Venom gland</tissue>
    </source>
</reference>
<name>PA2AI_TRIST</name>
<organism>
    <name type="scientific">Trimeresurus stejnegeri</name>
    <name type="common">Chinese green tree viper</name>
    <name type="synonym">Viridovipera stejnegeri</name>
    <dbReference type="NCBI Taxonomy" id="39682"/>
    <lineage>
        <taxon>Eukaryota</taxon>
        <taxon>Metazoa</taxon>
        <taxon>Chordata</taxon>
        <taxon>Craniata</taxon>
        <taxon>Vertebrata</taxon>
        <taxon>Euteleostomi</taxon>
        <taxon>Lepidosauria</taxon>
        <taxon>Squamata</taxon>
        <taxon>Bifurcata</taxon>
        <taxon>Unidentata</taxon>
        <taxon>Episquamata</taxon>
        <taxon>Toxicofera</taxon>
        <taxon>Serpentes</taxon>
        <taxon>Colubroidea</taxon>
        <taxon>Viperidae</taxon>
        <taxon>Crotalinae</taxon>
        <taxon>Trimeresurus</taxon>
    </lineage>
</organism>
<evidence type="ECO:0000250" key="1"/>
<evidence type="ECO:0000250" key="2">
    <source>
        <dbReference type="UniProtKB" id="P14418"/>
    </source>
</evidence>
<evidence type="ECO:0000255" key="3">
    <source>
        <dbReference type="PROSITE-ProRule" id="PRU10035"/>
    </source>
</evidence>
<evidence type="ECO:0000255" key="4">
    <source>
        <dbReference type="PROSITE-ProRule" id="PRU10036"/>
    </source>
</evidence>
<evidence type="ECO:0000269" key="5">
    <source>
    </source>
</evidence>
<evidence type="ECO:0000305" key="6"/>
<comment type="function">
    <text evidence="5">Snake venom phospholipase A2 (PLA2) that shows a moderate inhibition of ADP-induced human platelet aggregation when tested on platelet rich plasma. Exhibits moderate hydrolytic activities and prefers the anionic micelles (dPPC with deoxycholate) to the zwitterionic micelles (dPPC with Triton X-100). PLA2 catalyzes the calcium-dependent hydrolysis of the 2-acyl groups in 3-sn-phosphoglycerides.</text>
</comment>
<comment type="catalytic activity">
    <reaction evidence="3 4">
        <text>a 1,2-diacyl-sn-glycero-3-phosphocholine + H2O = a 1-acyl-sn-glycero-3-phosphocholine + a fatty acid + H(+)</text>
        <dbReference type="Rhea" id="RHEA:15801"/>
        <dbReference type="ChEBI" id="CHEBI:15377"/>
        <dbReference type="ChEBI" id="CHEBI:15378"/>
        <dbReference type="ChEBI" id="CHEBI:28868"/>
        <dbReference type="ChEBI" id="CHEBI:57643"/>
        <dbReference type="ChEBI" id="CHEBI:58168"/>
        <dbReference type="EC" id="3.1.1.4"/>
    </reaction>
</comment>
<comment type="cofactor">
    <cofactor evidence="1">
        <name>Ca(2+)</name>
        <dbReference type="ChEBI" id="CHEBI:29108"/>
    </cofactor>
    <text evidence="1">Binds 1 Ca(2+) ion.</text>
</comment>
<comment type="subcellular location">
    <subcellularLocation>
        <location>Secreted</location>
    </subcellularLocation>
</comment>
<comment type="tissue specificity">
    <text>Expressed by the venom gland.</text>
</comment>
<comment type="mass spectrometry" mass="13776.0" method="Electrospray" evidence="5"/>
<comment type="similarity">
    <text evidence="6">Belongs to the phospholipase A2 family. Group II subfamily. D49 sub-subfamily.</text>
</comment>
<protein>
    <recommendedName>
        <fullName>Acidic phospholipase A2 CTs-A3</fullName>
        <shortName>svPLA2</shortName>
        <ecNumber>3.1.1.4</ecNumber>
    </recommendedName>
    <alternativeName>
        <fullName>Phosphatidylcholine 2-acylhydrolase</fullName>
    </alternativeName>
</protein>
<accession>Q6H3C6</accession>
<sequence length="122" mass="13790">SLIQFETLIMKVAKKSGMFSYSAYGCYCGWGGQGQPQDPTDRCCFVHDCCYGKVTGCDPKMDIYTYSEENGDIVCGGDDPCRKAVCECDKAAAICFRDNKDTYDWKKYWRFPTKNCQESVPC</sequence>
<proteinExistence type="evidence at protein level"/>